<dbReference type="EMBL" id="BA000035">
    <property type="protein sequence ID" value="BAC17753.1"/>
    <property type="molecule type" value="Genomic_DNA"/>
</dbReference>
<dbReference type="RefSeq" id="WP_011075209.1">
    <property type="nucleotide sequence ID" value="NZ_GG700688.1"/>
</dbReference>
<dbReference type="SMR" id="Q8FR24"/>
<dbReference type="STRING" id="196164.gene:10741349"/>
<dbReference type="KEGG" id="cef:CE0943"/>
<dbReference type="eggNOG" id="COG0227">
    <property type="taxonomic scope" value="Bacteria"/>
</dbReference>
<dbReference type="HOGENOM" id="CLU_064548_3_1_11"/>
<dbReference type="OrthoDB" id="9805609at2"/>
<dbReference type="Proteomes" id="UP000001409">
    <property type="component" value="Chromosome"/>
</dbReference>
<dbReference type="GO" id="GO:1990904">
    <property type="term" value="C:ribonucleoprotein complex"/>
    <property type="evidence" value="ECO:0007669"/>
    <property type="project" value="UniProtKB-KW"/>
</dbReference>
<dbReference type="GO" id="GO:0005840">
    <property type="term" value="C:ribosome"/>
    <property type="evidence" value="ECO:0007669"/>
    <property type="project" value="UniProtKB-KW"/>
</dbReference>
<dbReference type="GO" id="GO:0003735">
    <property type="term" value="F:structural constituent of ribosome"/>
    <property type="evidence" value="ECO:0007669"/>
    <property type="project" value="InterPro"/>
</dbReference>
<dbReference type="GO" id="GO:0006412">
    <property type="term" value="P:translation"/>
    <property type="evidence" value="ECO:0007669"/>
    <property type="project" value="UniProtKB-UniRule"/>
</dbReference>
<dbReference type="FunFam" id="2.30.170.40:FF:000001">
    <property type="entry name" value="50S ribosomal protein L28"/>
    <property type="match status" value="1"/>
</dbReference>
<dbReference type="Gene3D" id="2.30.170.40">
    <property type="entry name" value="Ribosomal protein L28/L24"/>
    <property type="match status" value="1"/>
</dbReference>
<dbReference type="HAMAP" id="MF_00373">
    <property type="entry name" value="Ribosomal_bL28"/>
    <property type="match status" value="1"/>
</dbReference>
<dbReference type="InterPro" id="IPR026569">
    <property type="entry name" value="Ribosomal_bL28"/>
</dbReference>
<dbReference type="InterPro" id="IPR034704">
    <property type="entry name" value="Ribosomal_bL28/bL31-like_sf"/>
</dbReference>
<dbReference type="InterPro" id="IPR001383">
    <property type="entry name" value="Ribosomal_bL28_bact-type"/>
</dbReference>
<dbReference type="InterPro" id="IPR037147">
    <property type="entry name" value="Ribosomal_bL28_sf"/>
</dbReference>
<dbReference type="NCBIfam" id="TIGR00009">
    <property type="entry name" value="L28"/>
    <property type="match status" value="1"/>
</dbReference>
<dbReference type="PANTHER" id="PTHR13528">
    <property type="entry name" value="39S RIBOSOMAL PROTEIN L28, MITOCHONDRIAL"/>
    <property type="match status" value="1"/>
</dbReference>
<dbReference type="PANTHER" id="PTHR13528:SF2">
    <property type="entry name" value="LARGE RIBOSOMAL SUBUNIT PROTEIN BL28M"/>
    <property type="match status" value="1"/>
</dbReference>
<dbReference type="Pfam" id="PF00830">
    <property type="entry name" value="Ribosomal_L28"/>
    <property type="match status" value="1"/>
</dbReference>
<dbReference type="SUPFAM" id="SSF143800">
    <property type="entry name" value="L28p-like"/>
    <property type="match status" value="1"/>
</dbReference>
<keyword id="KW-1185">Reference proteome</keyword>
<keyword id="KW-0687">Ribonucleoprotein</keyword>
<keyword id="KW-0689">Ribosomal protein</keyword>
<accession>Q8FR24</accession>
<name>RL28_COREF</name>
<evidence type="ECO:0000255" key="1">
    <source>
        <dbReference type="HAMAP-Rule" id="MF_00373"/>
    </source>
</evidence>
<evidence type="ECO:0000256" key="2">
    <source>
        <dbReference type="SAM" id="MobiDB-lite"/>
    </source>
</evidence>
<evidence type="ECO:0000305" key="3"/>
<comment type="similarity">
    <text evidence="1">Belongs to the bacterial ribosomal protein bL28 family.</text>
</comment>
<reference key="1">
    <citation type="journal article" date="2003" name="Genome Res.">
        <title>Comparative complete genome sequence analysis of the amino acid replacements responsible for the thermostability of Corynebacterium efficiens.</title>
        <authorList>
            <person name="Nishio Y."/>
            <person name="Nakamura Y."/>
            <person name="Kawarabayasi Y."/>
            <person name="Usuda Y."/>
            <person name="Kimura E."/>
            <person name="Sugimoto S."/>
            <person name="Matsui K."/>
            <person name="Yamagishi A."/>
            <person name="Kikuchi H."/>
            <person name="Ikeo K."/>
            <person name="Gojobori T."/>
        </authorList>
    </citation>
    <scope>NUCLEOTIDE SEQUENCE [LARGE SCALE GENOMIC DNA]</scope>
    <source>
        <strain>DSM 44549 / YS-314 / AJ 12310 / JCM 11189 / NBRC 100395</strain>
    </source>
</reference>
<organism>
    <name type="scientific">Corynebacterium efficiens (strain DSM 44549 / YS-314 / AJ 12310 / JCM 11189 / NBRC 100395)</name>
    <dbReference type="NCBI Taxonomy" id="196164"/>
    <lineage>
        <taxon>Bacteria</taxon>
        <taxon>Bacillati</taxon>
        <taxon>Actinomycetota</taxon>
        <taxon>Actinomycetes</taxon>
        <taxon>Mycobacteriales</taxon>
        <taxon>Corynebacteriaceae</taxon>
        <taxon>Corynebacterium</taxon>
    </lineage>
</organism>
<proteinExistence type="inferred from homology"/>
<sequence>MSAHCQVTGRQPSFGKSVSHSHRRTSRRWNPNVQRRKFFVPSMGRTITLTVSTKGLKVIDRDGIEAVVAQIRARGEKI</sequence>
<gene>
    <name evidence="1" type="primary">rpmB</name>
    <name type="ordered locus">CE0943</name>
</gene>
<feature type="chain" id="PRO_0000178462" description="Large ribosomal subunit protein bL28">
    <location>
        <begin position="1"/>
        <end position="78"/>
    </location>
</feature>
<feature type="region of interest" description="Disordered" evidence="2">
    <location>
        <begin position="1"/>
        <end position="29"/>
    </location>
</feature>
<protein>
    <recommendedName>
        <fullName evidence="1">Large ribosomal subunit protein bL28</fullName>
    </recommendedName>
    <alternativeName>
        <fullName evidence="3">50S ribosomal protein L28</fullName>
    </alternativeName>
</protein>